<dbReference type="EMBL" id="AE016879">
    <property type="protein sequence ID" value="AAP27683.1"/>
    <property type="molecule type" value="Genomic_DNA"/>
</dbReference>
<dbReference type="EMBL" id="AE017334">
    <property type="protein sequence ID" value="AAT33068.1"/>
    <property type="molecule type" value="Genomic_DNA"/>
</dbReference>
<dbReference type="EMBL" id="AE017225">
    <property type="protein sequence ID" value="AAT55970.1"/>
    <property type="molecule type" value="Genomic_DNA"/>
</dbReference>
<dbReference type="RefSeq" id="NP_846197.1">
    <property type="nucleotide sequence ID" value="NC_003997.3"/>
</dbReference>
<dbReference type="RefSeq" id="WP_000359097.1">
    <property type="nucleotide sequence ID" value="NZ_WXXJ01000026.1"/>
</dbReference>
<dbReference type="RefSeq" id="YP_029919.1">
    <property type="nucleotide sequence ID" value="NC_005945.1"/>
</dbReference>
<dbReference type="SMR" id="Q81WL9"/>
<dbReference type="STRING" id="261594.GBAA_3954"/>
<dbReference type="DNASU" id="1086834"/>
<dbReference type="GeneID" id="93007295"/>
<dbReference type="KEGG" id="ban:BA_3954"/>
<dbReference type="KEGG" id="bar:GBAA_3954"/>
<dbReference type="KEGG" id="bat:BAS3668"/>
<dbReference type="PATRIC" id="fig|198094.11.peg.3924"/>
<dbReference type="eggNOG" id="COG0779">
    <property type="taxonomic scope" value="Bacteria"/>
</dbReference>
<dbReference type="HOGENOM" id="CLU_070525_2_0_9"/>
<dbReference type="OMA" id="YIHVSLY"/>
<dbReference type="OrthoDB" id="9805006at2"/>
<dbReference type="Proteomes" id="UP000000427">
    <property type="component" value="Chromosome"/>
</dbReference>
<dbReference type="Proteomes" id="UP000000594">
    <property type="component" value="Chromosome"/>
</dbReference>
<dbReference type="GO" id="GO:0005829">
    <property type="term" value="C:cytosol"/>
    <property type="evidence" value="ECO:0007669"/>
    <property type="project" value="TreeGrafter"/>
</dbReference>
<dbReference type="GO" id="GO:0000028">
    <property type="term" value="P:ribosomal small subunit assembly"/>
    <property type="evidence" value="ECO:0007669"/>
    <property type="project" value="TreeGrafter"/>
</dbReference>
<dbReference type="GO" id="GO:0006412">
    <property type="term" value="P:translation"/>
    <property type="evidence" value="ECO:0007669"/>
    <property type="project" value="TreeGrafter"/>
</dbReference>
<dbReference type="CDD" id="cd01734">
    <property type="entry name" value="YlxS_C"/>
    <property type="match status" value="1"/>
</dbReference>
<dbReference type="FunFam" id="2.30.30.180:FF:000002">
    <property type="entry name" value="Ribosome maturation factor RimP"/>
    <property type="match status" value="1"/>
</dbReference>
<dbReference type="FunFam" id="3.30.300.70:FF:000001">
    <property type="entry name" value="Ribosome maturation factor RimP"/>
    <property type="match status" value="1"/>
</dbReference>
<dbReference type="Gene3D" id="2.30.30.180">
    <property type="entry name" value="Ribosome maturation factor RimP, C-terminal domain"/>
    <property type="match status" value="1"/>
</dbReference>
<dbReference type="Gene3D" id="3.30.300.70">
    <property type="entry name" value="RimP-like superfamily, N-terminal"/>
    <property type="match status" value="1"/>
</dbReference>
<dbReference type="HAMAP" id="MF_01077">
    <property type="entry name" value="RimP"/>
    <property type="match status" value="1"/>
</dbReference>
<dbReference type="InterPro" id="IPR003728">
    <property type="entry name" value="Ribosome_maturation_RimP"/>
</dbReference>
<dbReference type="InterPro" id="IPR028998">
    <property type="entry name" value="RimP_C"/>
</dbReference>
<dbReference type="InterPro" id="IPR036847">
    <property type="entry name" value="RimP_C_sf"/>
</dbReference>
<dbReference type="InterPro" id="IPR028989">
    <property type="entry name" value="RimP_N"/>
</dbReference>
<dbReference type="InterPro" id="IPR035956">
    <property type="entry name" value="RimP_N_sf"/>
</dbReference>
<dbReference type="NCBIfam" id="NF000928">
    <property type="entry name" value="PRK00092.1-2"/>
    <property type="match status" value="1"/>
</dbReference>
<dbReference type="PANTHER" id="PTHR33867">
    <property type="entry name" value="RIBOSOME MATURATION FACTOR RIMP"/>
    <property type="match status" value="1"/>
</dbReference>
<dbReference type="PANTHER" id="PTHR33867:SF1">
    <property type="entry name" value="RIBOSOME MATURATION FACTOR RIMP"/>
    <property type="match status" value="1"/>
</dbReference>
<dbReference type="Pfam" id="PF17384">
    <property type="entry name" value="DUF150_C"/>
    <property type="match status" value="1"/>
</dbReference>
<dbReference type="Pfam" id="PF02576">
    <property type="entry name" value="RimP_N"/>
    <property type="match status" value="1"/>
</dbReference>
<dbReference type="SUPFAM" id="SSF74942">
    <property type="entry name" value="YhbC-like, C-terminal domain"/>
    <property type="match status" value="1"/>
</dbReference>
<dbReference type="SUPFAM" id="SSF75420">
    <property type="entry name" value="YhbC-like, N-terminal domain"/>
    <property type="match status" value="1"/>
</dbReference>
<name>RIMP_BACAN</name>
<evidence type="ECO:0000255" key="1">
    <source>
        <dbReference type="HAMAP-Rule" id="MF_01077"/>
    </source>
</evidence>
<feature type="chain" id="PRO_0000181840" description="Ribosome maturation factor RimP">
    <location>
        <begin position="1"/>
        <end position="156"/>
    </location>
</feature>
<proteinExistence type="inferred from homology"/>
<reference key="1">
    <citation type="journal article" date="2003" name="Nature">
        <title>The genome sequence of Bacillus anthracis Ames and comparison to closely related bacteria.</title>
        <authorList>
            <person name="Read T.D."/>
            <person name="Peterson S.N."/>
            <person name="Tourasse N.J."/>
            <person name="Baillie L.W."/>
            <person name="Paulsen I.T."/>
            <person name="Nelson K.E."/>
            <person name="Tettelin H."/>
            <person name="Fouts D.E."/>
            <person name="Eisen J.A."/>
            <person name="Gill S.R."/>
            <person name="Holtzapple E.K."/>
            <person name="Okstad O.A."/>
            <person name="Helgason E."/>
            <person name="Rilstone J."/>
            <person name="Wu M."/>
            <person name="Kolonay J.F."/>
            <person name="Beanan M.J."/>
            <person name="Dodson R.J."/>
            <person name="Brinkac L.M."/>
            <person name="Gwinn M.L."/>
            <person name="DeBoy R.T."/>
            <person name="Madpu R."/>
            <person name="Daugherty S.C."/>
            <person name="Durkin A.S."/>
            <person name="Haft D.H."/>
            <person name="Nelson W.C."/>
            <person name="Peterson J.D."/>
            <person name="Pop M."/>
            <person name="Khouri H.M."/>
            <person name="Radune D."/>
            <person name="Benton J.L."/>
            <person name="Mahamoud Y."/>
            <person name="Jiang L."/>
            <person name="Hance I.R."/>
            <person name="Weidman J.F."/>
            <person name="Berry K.J."/>
            <person name="Plaut R.D."/>
            <person name="Wolf A.M."/>
            <person name="Watkins K.L."/>
            <person name="Nierman W.C."/>
            <person name="Hazen A."/>
            <person name="Cline R.T."/>
            <person name="Redmond C."/>
            <person name="Thwaite J.E."/>
            <person name="White O."/>
            <person name="Salzberg S.L."/>
            <person name="Thomason B."/>
            <person name="Friedlander A.M."/>
            <person name="Koehler T.M."/>
            <person name="Hanna P.C."/>
            <person name="Kolstoe A.-B."/>
            <person name="Fraser C.M."/>
        </authorList>
    </citation>
    <scope>NUCLEOTIDE SEQUENCE [LARGE SCALE GENOMIC DNA]</scope>
    <source>
        <strain>Ames / isolate Porton</strain>
    </source>
</reference>
<reference key="2">
    <citation type="journal article" date="2009" name="J. Bacteriol.">
        <title>The complete genome sequence of Bacillus anthracis Ames 'Ancestor'.</title>
        <authorList>
            <person name="Ravel J."/>
            <person name="Jiang L."/>
            <person name="Stanley S.T."/>
            <person name="Wilson M.R."/>
            <person name="Decker R.S."/>
            <person name="Read T.D."/>
            <person name="Worsham P."/>
            <person name="Keim P.S."/>
            <person name="Salzberg S.L."/>
            <person name="Fraser-Liggett C.M."/>
            <person name="Rasko D.A."/>
        </authorList>
    </citation>
    <scope>NUCLEOTIDE SEQUENCE [LARGE SCALE GENOMIC DNA]</scope>
    <source>
        <strain>Ames ancestor</strain>
    </source>
</reference>
<reference key="3">
    <citation type="submission" date="2004-01" db="EMBL/GenBank/DDBJ databases">
        <title>Complete genome sequence of Bacillus anthracis Sterne.</title>
        <authorList>
            <person name="Brettin T.S."/>
            <person name="Bruce D."/>
            <person name="Challacombe J.F."/>
            <person name="Gilna P."/>
            <person name="Han C."/>
            <person name="Hill K."/>
            <person name="Hitchcock P."/>
            <person name="Jackson P."/>
            <person name="Keim P."/>
            <person name="Longmire J."/>
            <person name="Lucas S."/>
            <person name="Okinaka R."/>
            <person name="Richardson P."/>
            <person name="Rubin E."/>
            <person name="Tice H."/>
        </authorList>
    </citation>
    <scope>NUCLEOTIDE SEQUENCE [LARGE SCALE GENOMIC DNA]</scope>
    <source>
        <strain>Sterne</strain>
    </source>
</reference>
<sequence length="156" mass="17696">MDKKVTEVVEAFAQPIVEELNLELVDVEYVKEGQDWFLRVFIDSEKGVDIEECGAVSERLSEALDKEDPIPHLYFLDVSSPGAERPLKKEKDFQQAVGKQVAIKTYEPIDGEKMFEGKMLSYDGTTITLLLTIKTRKKEIQIPMDKVANARLAVTF</sequence>
<comment type="function">
    <text evidence="1">Required for maturation of 30S ribosomal subunits.</text>
</comment>
<comment type="subcellular location">
    <subcellularLocation>
        <location evidence="1">Cytoplasm</location>
    </subcellularLocation>
</comment>
<comment type="similarity">
    <text evidence="1">Belongs to the RimP family.</text>
</comment>
<keyword id="KW-0963">Cytoplasm</keyword>
<keyword id="KW-1185">Reference proteome</keyword>
<keyword id="KW-0690">Ribosome biogenesis</keyword>
<accession>Q81WL9</accession>
<accession>Q6HUR9</accession>
<accession>Q6KP01</accession>
<gene>
    <name evidence="1" type="primary">rimP</name>
    <name type="ordered locus">BA_3954</name>
    <name type="ordered locus">GBAA_3954</name>
    <name type="ordered locus">BAS3668</name>
</gene>
<protein>
    <recommendedName>
        <fullName evidence="1">Ribosome maturation factor RimP</fullName>
    </recommendedName>
</protein>
<organism>
    <name type="scientific">Bacillus anthracis</name>
    <dbReference type="NCBI Taxonomy" id="1392"/>
    <lineage>
        <taxon>Bacteria</taxon>
        <taxon>Bacillati</taxon>
        <taxon>Bacillota</taxon>
        <taxon>Bacilli</taxon>
        <taxon>Bacillales</taxon>
        <taxon>Bacillaceae</taxon>
        <taxon>Bacillus</taxon>
        <taxon>Bacillus cereus group</taxon>
    </lineage>
</organism>